<dbReference type="EC" id="7.1.1.-" evidence="1"/>
<dbReference type="EMBL" id="CP000572">
    <property type="protein sequence ID" value="ABN89205.1"/>
    <property type="molecule type" value="Genomic_DNA"/>
</dbReference>
<dbReference type="RefSeq" id="WP_004196426.1">
    <property type="nucleotide sequence ID" value="NC_009076.1"/>
</dbReference>
<dbReference type="SMR" id="A3NTB3"/>
<dbReference type="GeneID" id="93059701"/>
<dbReference type="KEGG" id="bpl:BURPS1106A_1306"/>
<dbReference type="HOGENOM" id="CLU_015134_0_1_4"/>
<dbReference type="Proteomes" id="UP000006738">
    <property type="component" value="Chromosome I"/>
</dbReference>
<dbReference type="GO" id="GO:0005886">
    <property type="term" value="C:plasma membrane"/>
    <property type="evidence" value="ECO:0007669"/>
    <property type="project" value="UniProtKB-SubCell"/>
</dbReference>
<dbReference type="GO" id="GO:0003954">
    <property type="term" value="F:NADH dehydrogenase activity"/>
    <property type="evidence" value="ECO:0007669"/>
    <property type="project" value="TreeGrafter"/>
</dbReference>
<dbReference type="GO" id="GO:0016655">
    <property type="term" value="F:oxidoreductase activity, acting on NAD(P)H, quinone or similar compound as acceptor"/>
    <property type="evidence" value="ECO:0007669"/>
    <property type="project" value="UniProtKB-UniRule"/>
</dbReference>
<dbReference type="GO" id="GO:0048038">
    <property type="term" value="F:quinone binding"/>
    <property type="evidence" value="ECO:0007669"/>
    <property type="project" value="UniProtKB-KW"/>
</dbReference>
<dbReference type="GO" id="GO:0009060">
    <property type="term" value="P:aerobic respiration"/>
    <property type="evidence" value="ECO:0007669"/>
    <property type="project" value="TreeGrafter"/>
</dbReference>
<dbReference type="HAMAP" id="MF_01350">
    <property type="entry name" value="NDH1_NuoH"/>
    <property type="match status" value="1"/>
</dbReference>
<dbReference type="InterPro" id="IPR001694">
    <property type="entry name" value="NADH_UbQ_OxRdtase_su1/FPO"/>
</dbReference>
<dbReference type="InterPro" id="IPR018086">
    <property type="entry name" value="NADH_UbQ_OxRdtase_su1_CS"/>
</dbReference>
<dbReference type="NCBIfam" id="NF004741">
    <property type="entry name" value="PRK06076.1-2"/>
    <property type="match status" value="1"/>
</dbReference>
<dbReference type="NCBIfam" id="NF004742">
    <property type="entry name" value="PRK06076.1-3"/>
    <property type="match status" value="1"/>
</dbReference>
<dbReference type="PANTHER" id="PTHR11432">
    <property type="entry name" value="NADH DEHYDROGENASE SUBUNIT 1"/>
    <property type="match status" value="1"/>
</dbReference>
<dbReference type="PANTHER" id="PTHR11432:SF3">
    <property type="entry name" value="NADH-UBIQUINONE OXIDOREDUCTASE CHAIN 1"/>
    <property type="match status" value="1"/>
</dbReference>
<dbReference type="Pfam" id="PF00146">
    <property type="entry name" value="NADHdh"/>
    <property type="match status" value="1"/>
</dbReference>
<dbReference type="PROSITE" id="PS00668">
    <property type="entry name" value="COMPLEX1_ND1_2"/>
    <property type="match status" value="1"/>
</dbReference>
<organism>
    <name type="scientific">Burkholderia pseudomallei (strain 1106a)</name>
    <dbReference type="NCBI Taxonomy" id="357348"/>
    <lineage>
        <taxon>Bacteria</taxon>
        <taxon>Pseudomonadati</taxon>
        <taxon>Pseudomonadota</taxon>
        <taxon>Betaproteobacteria</taxon>
        <taxon>Burkholderiales</taxon>
        <taxon>Burkholderiaceae</taxon>
        <taxon>Burkholderia</taxon>
        <taxon>pseudomallei group</taxon>
    </lineage>
</organism>
<sequence length="354" mass="39188">MSLFDTINSGGAQLLGVAWPTVWALVRILVVAVVILLCVAYLILWERKLIGWMHVRLGPNRVGPAGLLQPIADVLKLLLKEVIRPTAASRWLYLVAPVMTVVPAFAVWAVIPFQAGAVLANINAGLLYAMAISSIGVYAVILAGWASNSKYAFLGAMRAAAQMVSYEISMGFALVLVLMTAGSLNLSEIVGSQQHGFFAGHGVNFLSWNWLPLLPVFVIYFISGIAETNRHPFDVVEGESEIVAGHMIDYSGMAFALFFLAEYINMIVISALAATLFLGGWDAPFEFLSFIPGIFWLVLKIFALLSVFIWARATFPRYRYDQIMRLGWKVFLPVCVFWVIVVGFWMMSPLNIWK</sequence>
<gene>
    <name evidence="1" type="primary">nuoH</name>
    <name type="ordered locus">BURPS1106A_1306</name>
</gene>
<keyword id="KW-0997">Cell inner membrane</keyword>
<keyword id="KW-1003">Cell membrane</keyword>
<keyword id="KW-0472">Membrane</keyword>
<keyword id="KW-0520">NAD</keyword>
<keyword id="KW-0874">Quinone</keyword>
<keyword id="KW-1278">Translocase</keyword>
<keyword id="KW-0812">Transmembrane</keyword>
<keyword id="KW-1133">Transmembrane helix</keyword>
<keyword id="KW-0830">Ubiquinone</keyword>
<reference key="1">
    <citation type="journal article" date="2010" name="Genome Biol. Evol.">
        <title>Continuing evolution of Burkholderia mallei through genome reduction and large-scale rearrangements.</title>
        <authorList>
            <person name="Losada L."/>
            <person name="Ronning C.M."/>
            <person name="DeShazer D."/>
            <person name="Woods D."/>
            <person name="Fedorova N."/>
            <person name="Kim H.S."/>
            <person name="Shabalina S.A."/>
            <person name="Pearson T.R."/>
            <person name="Brinkac L."/>
            <person name="Tan P."/>
            <person name="Nandi T."/>
            <person name="Crabtree J."/>
            <person name="Badger J."/>
            <person name="Beckstrom-Sternberg S."/>
            <person name="Saqib M."/>
            <person name="Schutzer S.E."/>
            <person name="Keim P."/>
            <person name="Nierman W.C."/>
        </authorList>
    </citation>
    <scope>NUCLEOTIDE SEQUENCE [LARGE SCALE GENOMIC DNA]</scope>
    <source>
        <strain>1106a</strain>
    </source>
</reference>
<protein>
    <recommendedName>
        <fullName evidence="1">NADH-quinone oxidoreductase subunit H</fullName>
        <ecNumber evidence="1">7.1.1.-</ecNumber>
    </recommendedName>
    <alternativeName>
        <fullName evidence="1">NADH dehydrogenase I subunit H</fullName>
    </alternativeName>
    <alternativeName>
        <fullName evidence="1">NDH-1 subunit H</fullName>
    </alternativeName>
</protein>
<comment type="function">
    <text evidence="1">NDH-1 shuttles electrons from NADH, via FMN and iron-sulfur (Fe-S) centers, to quinones in the respiratory chain. The immediate electron acceptor for the enzyme in this species is believed to be ubiquinone. Couples the redox reaction to proton translocation (for every two electrons transferred, four hydrogen ions are translocated across the cytoplasmic membrane), and thus conserves the redox energy in a proton gradient. This subunit may bind ubiquinone.</text>
</comment>
<comment type="catalytic activity">
    <reaction evidence="1">
        <text>a quinone + NADH + 5 H(+)(in) = a quinol + NAD(+) + 4 H(+)(out)</text>
        <dbReference type="Rhea" id="RHEA:57888"/>
        <dbReference type="ChEBI" id="CHEBI:15378"/>
        <dbReference type="ChEBI" id="CHEBI:24646"/>
        <dbReference type="ChEBI" id="CHEBI:57540"/>
        <dbReference type="ChEBI" id="CHEBI:57945"/>
        <dbReference type="ChEBI" id="CHEBI:132124"/>
    </reaction>
</comment>
<comment type="subunit">
    <text evidence="1">NDH-1 is composed of 14 different subunits. Subunits NuoA, H, J, K, L, M, N constitute the membrane sector of the complex.</text>
</comment>
<comment type="subcellular location">
    <subcellularLocation>
        <location evidence="1">Cell inner membrane</location>
        <topology evidence="1">Multi-pass membrane protein</topology>
    </subcellularLocation>
</comment>
<comment type="similarity">
    <text evidence="1">Belongs to the complex I subunit 1 family.</text>
</comment>
<evidence type="ECO:0000255" key="1">
    <source>
        <dbReference type="HAMAP-Rule" id="MF_01350"/>
    </source>
</evidence>
<proteinExistence type="inferred from homology"/>
<accession>A3NTB3</accession>
<feature type="chain" id="PRO_0000298801" description="NADH-quinone oxidoreductase subunit H">
    <location>
        <begin position="1"/>
        <end position="354"/>
    </location>
</feature>
<feature type="transmembrane region" description="Helical" evidence="1">
    <location>
        <begin position="25"/>
        <end position="45"/>
    </location>
</feature>
<feature type="transmembrane region" description="Helical" evidence="1">
    <location>
        <begin position="91"/>
        <end position="111"/>
    </location>
</feature>
<feature type="transmembrane region" description="Helical" evidence="1">
    <location>
        <begin position="126"/>
        <end position="146"/>
    </location>
</feature>
<feature type="transmembrane region" description="Helical" evidence="1">
    <location>
        <begin position="170"/>
        <end position="190"/>
    </location>
</feature>
<feature type="transmembrane region" description="Helical" evidence="1">
    <location>
        <begin position="205"/>
        <end position="225"/>
    </location>
</feature>
<feature type="transmembrane region" description="Helical" evidence="1">
    <location>
        <begin position="253"/>
        <end position="273"/>
    </location>
</feature>
<feature type="transmembrane region" description="Helical" evidence="1">
    <location>
        <begin position="290"/>
        <end position="310"/>
    </location>
</feature>
<feature type="transmembrane region" description="Helical" evidence="1">
    <location>
        <begin position="330"/>
        <end position="350"/>
    </location>
</feature>
<name>NUOH_BURP0</name>